<organism>
    <name type="scientific">Bacteroides thetaiotaomicron (strain ATCC 29148 / DSM 2079 / JCM 5827 / CCUG 10774 / NCTC 10582 / VPI-5482 / E50)</name>
    <dbReference type="NCBI Taxonomy" id="226186"/>
    <lineage>
        <taxon>Bacteria</taxon>
        <taxon>Pseudomonadati</taxon>
        <taxon>Bacteroidota</taxon>
        <taxon>Bacteroidia</taxon>
        <taxon>Bacteroidales</taxon>
        <taxon>Bacteroidaceae</taxon>
        <taxon>Bacteroides</taxon>
    </lineage>
</organism>
<accession>Q8A495</accession>
<proteinExistence type="inferred from homology"/>
<dbReference type="EMBL" id="AE015928">
    <property type="protein sequence ID" value="AAO77814.1"/>
    <property type="molecule type" value="Genomic_DNA"/>
</dbReference>
<dbReference type="RefSeq" id="NP_811620.1">
    <property type="nucleotide sequence ID" value="NC_004663.1"/>
</dbReference>
<dbReference type="RefSeq" id="WP_008762046.1">
    <property type="nucleotide sequence ID" value="NZ_UYXG01000001.1"/>
</dbReference>
<dbReference type="SMR" id="Q8A495"/>
<dbReference type="FunCoup" id="Q8A495">
    <property type="interactions" value="585"/>
</dbReference>
<dbReference type="STRING" id="226186.BT_2708"/>
<dbReference type="PaxDb" id="226186-BT_2708"/>
<dbReference type="EnsemblBacteria" id="AAO77814">
    <property type="protein sequence ID" value="AAO77814"/>
    <property type="gene ID" value="BT_2708"/>
</dbReference>
<dbReference type="GeneID" id="69587568"/>
<dbReference type="KEGG" id="bth:BT_2708"/>
<dbReference type="PATRIC" id="fig|226186.12.peg.2751"/>
<dbReference type="eggNOG" id="COG0200">
    <property type="taxonomic scope" value="Bacteria"/>
</dbReference>
<dbReference type="HOGENOM" id="CLU_055188_4_2_10"/>
<dbReference type="InParanoid" id="Q8A495"/>
<dbReference type="OrthoDB" id="9810293at2"/>
<dbReference type="Proteomes" id="UP000001414">
    <property type="component" value="Chromosome"/>
</dbReference>
<dbReference type="GO" id="GO:0022625">
    <property type="term" value="C:cytosolic large ribosomal subunit"/>
    <property type="evidence" value="ECO:0000318"/>
    <property type="project" value="GO_Central"/>
</dbReference>
<dbReference type="GO" id="GO:0019843">
    <property type="term" value="F:rRNA binding"/>
    <property type="evidence" value="ECO:0007669"/>
    <property type="project" value="UniProtKB-UniRule"/>
</dbReference>
<dbReference type="GO" id="GO:0003735">
    <property type="term" value="F:structural constituent of ribosome"/>
    <property type="evidence" value="ECO:0000318"/>
    <property type="project" value="GO_Central"/>
</dbReference>
<dbReference type="GO" id="GO:0006412">
    <property type="term" value="P:translation"/>
    <property type="evidence" value="ECO:0007669"/>
    <property type="project" value="UniProtKB-UniRule"/>
</dbReference>
<dbReference type="Gene3D" id="3.100.10.10">
    <property type="match status" value="1"/>
</dbReference>
<dbReference type="HAMAP" id="MF_01341">
    <property type="entry name" value="Ribosomal_uL15"/>
    <property type="match status" value="1"/>
</dbReference>
<dbReference type="InterPro" id="IPR030878">
    <property type="entry name" value="Ribosomal_uL15"/>
</dbReference>
<dbReference type="InterPro" id="IPR021131">
    <property type="entry name" value="Ribosomal_uL15/eL18"/>
</dbReference>
<dbReference type="InterPro" id="IPR036227">
    <property type="entry name" value="Ribosomal_uL15/eL18_sf"/>
</dbReference>
<dbReference type="InterPro" id="IPR005749">
    <property type="entry name" value="Ribosomal_uL15_bac-type"/>
</dbReference>
<dbReference type="InterPro" id="IPR001196">
    <property type="entry name" value="Ribosomal_uL15_CS"/>
</dbReference>
<dbReference type="NCBIfam" id="TIGR01071">
    <property type="entry name" value="rplO_bact"/>
    <property type="match status" value="1"/>
</dbReference>
<dbReference type="PANTHER" id="PTHR12934">
    <property type="entry name" value="50S RIBOSOMAL PROTEIN L15"/>
    <property type="match status" value="1"/>
</dbReference>
<dbReference type="PANTHER" id="PTHR12934:SF11">
    <property type="entry name" value="LARGE RIBOSOMAL SUBUNIT PROTEIN UL15M"/>
    <property type="match status" value="1"/>
</dbReference>
<dbReference type="Pfam" id="PF00828">
    <property type="entry name" value="Ribosomal_L27A"/>
    <property type="match status" value="1"/>
</dbReference>
<dbReference type="SUPFAM" id="SSF52080">
    <property type="entry name" value="Ribosomal proteins L15p and L18e"/>
    <property type="match status" value="1"/>
</dbReference>
<dbReference type="PROSITE" id="PS00475">
    <property type="entry name" value="RIBOSOMAL_L15"/>
    <property type="match status" value="1"/>
</dbReference>
<evidence type="ECO:0000255" key="1">
    <source>
        <dbReference type="HAMAP-Rule" id="MF_01341"/>
    </source>
</evidence>
<evidence type="ECO:0000256" key="2">
    <source>
        <dbReference type="SAM" id="MobiDB-lite"/>
    </source>
</evidence>
<evidence type="ECO:0000305" key="3"/>
<protein>
    <recommendedName>
        <fullName evidence="1">Large ribosomal subunit protein uL15</fullName>
    </recommendedName>
    <alternativeName>
        <fullName evidence="3">50S ribosomal protein L15</fullName>
    </alternativeName>
</protein>
<comment type="function">
    <text evidence="1">Binds to the 23S rRNA.</text>
</comment>
<comment type="subunit">
    <text evidence="1">Part of the 50S ribosomal subunit.</text>
</comment>
<comment type="similarity">
    <text evidence="1">Belongs to the universal ribosomal protein uL15 family.</text>
</comment>
<reference key="1">
    <citation type="journal article" date="2003" name="Science">
        <title>A genomic view of the human-Bacteroides thetaiotaomicron symbiosis.</title>
        <authorList>
            <person name="Xu J."/>
            <person name="Bjursell M.K."/>
            <person name="Himrod J."/>
            <person name="Deng S."/>
            <person name="Carmichael L.K."/>
            <person name="Chiang H.C."/>
            <person name="Hooper L.V."/>
            <person name="Gordon J.I."/>
        </authorList>
    </citation>
    <scope>NUCLEOTIDE SEQUENCE [LARGE SCALE GENOMIC DNA]</scope>
    <source>
        <strain>ATCC 29148 / DSM 2079 / JCM 5827 / CCUG 10774 / NCTC 10582 / VPI-5482 / E50</strain>
    </source>
</reference>
<gene>
    <name evidence="1" type="primary">rplO</name>
    <name type="ordered locus">BT_2708</name>
</gene>
<name>RL15_BACTN</name>
<sequence>MNLSNLKPAEGSTKTRKRIGRGAGSGLGGTSTRGHKGAKSRSGYSKKVGFEGGQMPLQRRVPKFGFKNINRVEYKAINLDTIQTLADAKNLTKVGISDFIEAGFISSNQLVKVLGNGALTNKLEVEANAFSKSAAAAIEAAGGTVVKL</sequence>
<feature type="chain" id="PRO_0000104678" description="Large ribosomal subunit protein uL15">
    <location>
        <begin position="1"/>
        <end position="148"/>
    </location>
</feature>
<feature type="region of interest" description="Disordered" evidence="2">
    <location>
        <begin position="1"/>
        <end position="51"/>
    </location>
</feature>
<feature type="compositionally biased region" description="Gly residues" evidence="2">
    <location>
        <begin position="21"/>
        <end position="31"/>
    </location>
</feature>
<keyword id="KW-1185">Reference proteome</keyword>
<keyword id="KW-0687">Ribonucleoprotein</keyword>
<keyword id="KW-0689">Ribosomal protein</keyword>
<keyword id="KW-0694">RNA-binding</keyword>
<keyword id="KW-0699">rRNA-binding</keyword>